<accession>P24780</accession>
<proteinExistence type="evidence at protein level"/>
<reference key="1">
    <citation type="journal article" date="1984" name="Biochem. Int.">
        <title>Amino acid sequence of cytotoxin IIa isolated from the venom of the Indian cobra (Naja naja).</title>
        <authorList>
            <person name="Kaneda N."/>
            <person name="Takechi M."/>
            <person name="Sasaki T."/>
            <person name="Hayashi K."/>
        </authorList>
    </citation>
    <scope>PROTEIN SEQUENCE</scope>
    <scope>SUBCELLULAR LOCATION</scope>
    <scope>TOXIC DOSE</scope>
    <source>
        <tissue>Venom</tissue>
    </source>
</reference>
<protein>
    <recommendedName>
        <fullName>Cytotoxin 3</fullName>
    </recommendedName>
    <alternativeName>
        <fullName>Cytotoxin IIa</fullName>
    </alternativeName>
</protein>
<keyword id="KW-0123">Cardiotoxin</keyword>
<keyword id="KW-0204">Cytolysis</keyword>
<keyword id="KW-0903">Direct protein sequencing</keyword>
<keyword id="KW-1015">Disulfide bond</keyword>
<keyword id="KW-0472">Membrane</keyword>
<keyword id="KW-1185">Reference proteome</keyword>
<keyword id="KW-0964">Secreted</keyword>
<keyword id="KW-1052">Target cell membrane</keyword>
<keyword id="KW-1053">Target membrane</keyword>
<keyword id="KW-0800">Toxin</keyword>
<name>3SA3_NAJNA</name>
<feature type="chain" id="PRO_0000093512" description="Cytotoxin 3" evidence="3">
    <location>
        <begin position="1"/>
        <end position="60"/>
    </location>
</feature>
<feature type="disulfide bond" evidence="1">
    <location>
        <begin position="3"/>
        <end position="21"/>
    </location>
</feature>
<feature type="disulfide bond" evidence="1">
    <location>
        <begin position="14"/>
        <end position="38"/>
    </location>
</feature>
<feature type="disulfide bond" evidence="1">
    <location>
        <begin position="42"/>
        <end position="53"/>
    </location>
</feature>
<feature type="disulfide bond" evidence="1">
    <location>
        <begin position="54"/>
        <end position="59"/>
    </location>
</feature>
<evidence type="ECO:0000250" key="1">
    <source>
        <dbReference type="UniProtKB" id="P60301"/>
    </source>
</evidence>
<evidence type="ECO:0000250" key="2">
    <source>
        <dbReference type="UniProtKB" id="P60304"/>
    </source>
</evidence>
<evidence type="ECO:0000269" key="3">
    <source>
    </source>
</evidence>
<evidence type="ECO:0000305" key="4"/>
<sequence length="60" mass="6745">LKCNKLIPLAYKTCPAGKNLCYKMFMVSNKTVPVKRGCIDVCPKNSLVLKYVCCNTDRCN</sequence>
<comment type="function">
    <text evidence="1 2">Shows cytolytic activity on many different cells by forming pore in lipid membranes. In vivo, increases heart rate or kills the animal by cardiac arrest. In addition, it binds to heparin with high affinity, interacts with Kv channel-interacting protein 1 (KCNIP1) in a calcium-independent manner, and binds to integrin alpha-V/beta-3 (ITGAV/ITGB3) with moderate affinity.</text>
</comment>
<comment type="subunit">
    <text evidence="1">Monomer in solution; Homodimer and oligomer in the presence of negatively charged lipids forming a pore with a size ranging between 20 and 30 Angstroms.</text>
</comment>
<comment type="subcellular location">
    <subcellularLocation>
        <location evidence="3">Secreted</location>
    </subcellularLocation>
    <subcellularLocation>
        <location evidence="1">Target cell membrane</location>
    </subcellularLocation>
</comment>
<comment type="tissue specificity">
    <text evidence="4">Expressed by the venom gland.</text>
</comment>
<comment type="toxic dose">
    <text evidence="3">LD(50) is 40 to 55 mg/kg by subcutaneous injection.</text>
</comment>
<comment type="miscellaneous">
    <text evidence="4">Is classified as a S-type cytotoxin, since a serine residue stands at position 28 (Ser-29 in standard classification).</text>
</comment>
<comment type="similarity">
    <text evidence="4">Belongs to the three-finger toxin family. Short-chain subfamily. Type IA cytotoxin sub-subfamily.</text>
</comment>
<dbReference type="SMR" id="P24780"/>
<dbReference type="Proteomes" id="UP000694559">
    <property type="component" value="Unplaced"/>
</dbReference>
<dbReference type="GO" id="GO:0005576">
    <property type="term" value="C:extracellular region"/>
    <property type="evidence" value="ECO:0007669"/>
    <property type="project" value="UniProtKB-SubCell"/>
</dbReference>
<dbReference type="GO" id="GO:0016020">
    <property type="term" value="C:membrane"/>
    <property type="evidence" value="ECO:0007669"/>
    <property type="project" value="UniProtKB-KW"/>
</dbReference>
<dbReference type="GO" id="GO:0044218">
    <property type="term" value="C:other organism cell membrane"/>
    <property type="evidence" value="ECO:0007669"/>
    <property type="project" value="UniProtKB-KW"/>
</dbReference>
<dbReference type="GO" id="GO:0090729">
    <property type="term" value="F:toxin activity"/>
    <property type="evidence" value="ECO:0007669"/>
    <property type="project" value="UniProtKB-KW"/>
</dbReference>
<dbReference type="GO" id="GO:0031640">
    <property type="term" value="P:killing of cells of another organism"/>
    <property type="evidence" value="ECO:0007669"/>
    <property type="project" value="UniProtKB-KW"/>
</dbReference>
<dbReference type="CDD" id="cd00206">
    <property type="entry name" value="TFP_snake_toxin"/>
    <property type="match status" value="1"/>
</dbReference>
<dbReference type="FunFam" id="2.10.60.10:FF:000024">
    <property type="entry name" value="Cytotoxin 1"/>
    <property type="match status" value="1"/>
</dbReference>
<dbReference type="Gene3D" id="2.10.60.10">
    <property type="entry name" value="CD59"/>
    <property type="match status" value="1"/>
</dbReference>
<dbReference type="InterPro" id="IPR003572">
    <property type="entry name" value="Cytotoxin_Cobra"/>
</dbReference>
<dbReference type="InterPro" id="IPR003571">
    <property type="entry name" value="Snake_3FTx"/>
</dbReference>
<dbReference type="InterPro" id="IPR045860">
    <property type="entry name" value="Snake_toxin-like_sf"/>
</dbReference>
<dbReference type="InterPro" id="IPR018354">
    <property type="entry name" value="Snake_toxin_con_site"/>
</dbReference>
<dbReference type="InterPro" id="IPR054131">
    <property type="entry name" value="Toxin_cobra-type"/>
</dbReference>
<dbReference type="Pfam" id="PF21947">
    <property type="entry name" value="Toxin_cobra-type"/>
    <property type="match status" value="1"/>
</dbReference>
<dbReference type="PRINTS" id="PR00282">
    <property type="entry name" value="CYTOTOXIN"/>
</dbReference>
<dbReference type="SUPFAM" id="SSF57302">
    <property type="entry name" value="Snake toxin-like"/>
    <property type="match status" value="1"/>
</dbReference>
<dbReference type="PROSITE" id="PS00272">
    <property type="entry name" value="SNAKE_TOXIN"/>
    <property type="match status" value="1"/>
</dbReference>
<organism>
    <name type="scientific">Naja naja</name>
    <name type="common">Indian cobra</name>
    <dbReference type="NCBI Taxonomy" id="35670"/>
    <lineage>
        <taxon>Eukaryota</taxon>
        <taxon>Metazoa</taxon>
        <taxon>Chordata</taxon>
        <taxon>Craniata</taxon>
        <taxon>Vertebrata</taxon>
        <taxon>Euteleostomi</taxon>
        <taxon>Lepidosauria</taxon>
        <taxon>Squamata</taxon>
        <taxon>Bifurcata</taxon>
        <taxon>Unidentata</taxon>
        <taxon>Episquamata</taxon>
        <taxon>Toxicofera</taxon>
        <taxon>Serpentes</taxon>
        <taxon>Colubroidea</taxon>
        <taxon>Elapidae</taxon>
        <taxon>Elapinae</taxon>
        <taxon>Naja</taxon>
    </lineage>
</organism>